<organism>
    <name type="scientific">Staphylococcus aureus</name>
    <dbReference type="NCBI Taxonomy" id="1280"/>
    <lineage>
        <taxon>Bacteria</taxon>
        <taxon>Bacillati</taxon>
        <taxon>Bacillota</taxon>
        <taxon>Bacilli</taxon>
        <taxon>Bacillales</taxon>
        <taxon>Staphylococcaceae</taxon>
        <taxon>Staphylococcus</taxon>
    </lineage>
</organism>
<accession>P0C1R8</accession>
<accession>O07322</accession>
<accession>O24815</accession>
<accession>P68784</accession>
<dbReference type="EC" id="2.7.8.13" evidence="1"/>
<dbReference type="EMBL" id="AF034153">
    <property type="protein sequence ID" value="AAD01977.1"/>
    <property type="molecule type" value="Genomic_DNA"/>
</dbReference>
<dbReference type="RefSeq" id="WP_000578458.1">
    <property type="nucleotide sequence ID" value="NZ_WWFR01000001.1"/>
</dbReference>
<dbReference type="SMR" id="P0C1R8"/>
<dbReference type="BindingDB" id="P0C1R8"/>
<dbReference type="ChEMBL" id="CHEMBL1770035"/>
<dbReference type="SwissLipids" id="SLP:000001815"/>
<dbReference type="OMA" id="DTPTMGG"/>
<dbReference type="BioCyc" id="MetaCyc:MONOMER-12257"/>
<dbReference type="UniPathway" id="UPA00219"/>
<dbReference type="PRO" id="PR:P0C1R8"/>
<dbReference type="GO" id="GO:0005886">
    <property type="term" value="C:plasma membrane"/>
    <property type="evidence" value="ECO:0007669"/>
    <property type="project" value="UniProtKB-SubCell"/>
</dbReference>
<dbReference type="GO" id="GO:0046872">
    <property type="term" value="F:metal ion binding"/>
    <property type="evidence" value="ECO:0007669"/>
    <property type="project" value="UniProtKB-KW"/>
</dbReference>
<dbReference type="GO" id="GO:0008963">
    <property type="term" value="F:phospho-N-acetylmuramoyl-pentapeptide-transferase activity"/>
    <property type="evidence" value="ECO:0007669"/>
    <property type="project" value="UniProtKB-UniRule"/>
</dbReference>
<dbReference type="GO" id="GO:0051301">
    <property type="term" value="P:cell division"/>
    <property type="evidence" value="ECO:0007669"/>
    <property type="project" value="UniProtKB-KW"/>
</dbReference>
<dbReference type="GO" id="GO:0071555">
    <property type="term" value="P:cell wall organization"/>
    <property type="evidence" value="ECO:0007669"/>
    <property type="project" value="UniProtKB-KW"/>
</dbReference>
<dbReference type="GO" id="GO:0009252">
    <property type="term" value="P:peptidoglycan biosynthetic process"/>
    <property type="evidence" value="ECO:0007669"/>
    <property type="project" value="UniProtKB-UniRule"/>
</dbReference>
<dbReference type="GO" id="GO:0008360">
    <property type="term" value="P:regulation of cell shape"/>
    <property type="evidence" value="ECO:0007669"/>
    <property type="project" value="UniProtKB-KW"/>
</dbReference>
<dbReference type="CDD" id="cd06852">
    <property type="entry name" value="GT_MraY"/>
    <property type="match status" value="1"/>
</dbReference>
<dbReference type="HAMAP" id="MF_00038">
    <property type="entry name" value="MraY"/>
    <property type="match status" value="1"/>
</dbReference>
<dbReference type="InterPro" id="IPR000715">
    <property type="entry name" value="Glycosyl_transferase_4"/>
</dbReference>
<dbReference type="InterPro" id="IPR003524">
    <property type="entry name" value="PNAcMuramoyl-5peptid_Trfase"/>
</dbReference>
<dbReference type="InterPro" id="IPR018480">
    <property type="entry name" value="PNAcMuramoyl-5peptid_Trfase_CS"/>
</dbReference>
<dbReference type="NCBIfam" id="TIGR00445">
    <property type="entry name" value="mraY"/>
    <property type="match status" value="1"/>
</dbReference>
<dbReference type="PANTHER" id="PTHR22926">
    <property type="entry name" value="PHOSPHO-N-ACETYLMURAMOYL-PENTAPEPTIDE-TRANSFERASE"/>
    <property type="match status" value="1"/>
</dbReference>
<dbReference type="PANTHER" id="PTHR22926:SF5">
    <property type="entry name" value="PHOSPHO-N-ACETYLMURAMOYL-PENTAPEPTIDE-TRANSFERASE HOMOLOG"/>
    <property type="match status" value="1"/>
</dbReference>
<dbReference type="Pfam" id="PF00953">
    <property type="entry name" value="Glycos_transf_4"/>
    <property type="match status" value="1"/>
</dbReference>
<dbReference type="PROSITE" id="PS01347">
    <property type="entry name" value="MRAY_1"/>
    <property type="match status" value="1"/>
</dbReference>
<dbReference type="PROSITE" id="PS01348">
    <property type="entry name" value="MRAY_2"/>
    <property type="match status" value="1"/>
</dbReference>
<comment type="function">
    <text evidence="1">Catalyzes the initial step of the lipid cycle reactions in the biosynthesis of the cell wall peptidoglycan: transfers peptidoglycan precursor phospho-MurNAc-pentapeptide from UDP-MurNAc-pentapeptide onto the lipid carrier undecaprenyl phosphate, yielding undecaprenyl-pyrophosphoryl-MurNAc-pentapeptide, known as lipid I.</text>
</comment>
<comment type="catalytic activity">
    <reaction evidence="1">
        <text>UDP-N-acetyl-alpha-D-muramoyl-L-alanyl-gamma-D-glutamyl-L-lysyl-D-alanyl-D-alanine + di-trans,octa-cis-undecaprenyl phosphate = Mur2Ac(oyl-L-Ala-gamma-D-Glu-L-Lys-D-Ala-D-Ala)-di-trans,octa-cis-undecaprenyl diphosphate + UMP</text>
        <dbReference type="Rhea" id="RHEA:21920"/>
        <dbReference type="ChEBI" id="CHEBI:57865"/>
        <dbReference type="ChEBI" id="CHEBI:60032"/>
        <dbReference type="ChEBI" id="CHEBI:60392"/>
        <dbReference type="ChEBI" id="CHEBI:70758"/>
        <dbReference type="EC" id="2.7.8.13"/>
    </reaction>
</comment>
<comment type="cofactor">
    <cofactor evidence="1">
        <name>Mg(2+)</name>
        <dbReference type="ChEBI" id="CHEBI:18420"/>
    </cofactor>
</comment>
<comment type="pathway">
    <text evidence="1">Cell wall biogenesis; peptidoglycan biosynthesis.</text>
</comment>
<comment type="subcellular location">
    <subcellularLocation>
        <location evidence="1">Cell membrane</location>
        <topology evidence="1">Multi-pass membrane protein</topology>
    </subcellularLocation>
</comment>
<comment type="similarity">
    <text evidence="1 2">Belongs to the glycosyltransferase 4 family. MraY subfamily.</text>
</comment>
<reference key="1">
    <citation type="submission" date="1997-11" db="EMBL/GenBank/DDBJ databases">
        <title>Cloning and characterization of the Staphylococcus aureus mraY gene encoding phospho-N-acetylmuramoyl-pentapeptide translocase.</title>
        <authorList>
            <person name="El-Sherbeini M."/>
            <person name="Geissler W.M."/>
            <person name="Azzolina B.A."/>
            <person name="Yuan X."/>
            <person name="Hyland S.A."/>
            <person name="Anderson M.S."/>
            <person name="Pompliano D.L."/>
        </authorList>
    </citation>
    <scope>NUCLEOTIDE SEQUENCE [GENOMIC DNA]</scope>
    <source>
        <strain>R27</strain>
    </source>
</reference>
<name>MRAY_STAAU</name>
<keyword id="KW-0131">Cell cycle</keyword>
<keyword id="KW-0132">Cell division</keyword>
<keyword id="KW-1003">Cell membrane</keyword>
<keyword id="KW-0133">Cell shape</keyword>
<keyword id="KW-0961">Cell wall biogenesis/degradation</keyword>
<keyword id="KW-0460">Magnesium</keyword>
<keyword id="KW-0472">Membrane</keyword>
<keyword id="KW-0479">Metal-binding</keyword>
<keyword id="KW-0573">Peptidoglycan synthesis</keyword>
<keyword id="KW-0808">Transferase</keyword>
<keyword id="KW-0812">Transmembrane</keyword>
<keyword id="KW-1133">Transmembrane helix</keyword>
<proteinExistence type="inferred from homology"/>
<protein>
    <recommendedName>
        <fullName evidence="1">Phospho-N-acetylmuramoyl-pentapeptide-transferase</fullName>
        <ecNumber evidence="1">2.7.8.13</ecNumber>
    </recommendedName>
    <alternativeName>
        <fullName evidence="1">UDP-MurNAc-pentapeptide phosphotransferase</fullName>
    </alternativeName>
</protein>
<gene>
    <name evidence="1" type="primary">mraY</name>
</gene>
<sequence>MIFVYALLALVITFVLVPVLIPTLKRMKFGQSIREEGPQSHMKKTGTPTMGGLTFLLSIVITSLVAIIFVDQANPIILLLFVTIGFGLIGFIDDYIIVVKKNNQGLTSKQKFLAQIGIAIIFFVLSNVFHLVNFSTSIHIPFTNVAIPLSFAYVIFIVFWQVGFSNAVNLTDGLDGLATGLSIIGFTMYAIMSFVLGETAIGIFCIIMLFALLGFLPYNINPAKVFMGDTGSLALGGIFATISIMLNQELSLIFIGLVFVIETLSVMLQVASFKLTGKRIFKMSPIHHHFELIGWSEWKVVTVFWAVGLISGLIGLWIGVH</sequence>
<evidence type="ECO:0000255" key="1">
    <source>
        <dbReference type="HAMAP-Rule" id="MF_00038"/>
    </source>
</evidence>
<evidence type="ECO:0000305" key="2"/>
<feature type="chain" id="PRO_0000108895" description="Phospho-N-acetylmuramoyl-pentapeptide-transferase">
    <location>
        <begin position="1"/>
        <end position="321"/>
    </location>
</feature>
<feature type="transmembrane region" description="Helical" evidence="1">
    <location>
        <begin position="1"/>
        <end position="21"/>
    </location>
</feature>
<feature type="transmembrane region" description="Helical" evidence="1">
    <location>
        <begin position="50"/>
        <end position="70"/>
    </location>
</feature>
<feature type="transmembrane region" description="Helical" evidence="1">
    <location>
        <begin position="76"/>
        <end position="96"/>
    </location>
</feature>
<feature type="transmembrane region" description="Helical" evidence="1">
    <location>
        <begin position="112"/>
        <end position="132"/>
    </location>
</feature>
<feature type="transmembrane region" description="Helical" evidence="1">
    <location>
        <begin position="140"/>
        <end position="160"/>
    </location>
</feature>
<feature type="transmembrane region" description="Helical" evidence="1">
    <location>
        <begin position="176"/>
        <end position="196"/>
    </location>
</feature>
<feature type="transmembrane region" description="Helical" evidence="1">
    <location>
        <begin position="200"/>
        <end position="220"/>
    </location>
</feature>
<feature type="transmembrane region" description="Helical" evidence="1">
    <location>
        <begin position="225"/>
        <end position="245"/>
    </location>
</feature>
<feature type="transmembrane region" description="Helical" evidence="1">
    <location>
        <begin position="250"/>
        <end position="270"/>
    </location>
</feature>
<feature type="transmembrane region" description="Helical" evidence="1">
    <location>
        <begin position="300"/>
        <end position="320"/>
    </location>
</feature>